<keyword id="KW-0067">ATP-binding</keyword>
<keyword id="KW-0963">Cytoplasm</keyword>
<keyword id="KW-0227">DNA damage</keyword>
<keyword id="KW-0234">DNA repair</keyword>
<keyword id="KW-0235">DNA replication</keyword>
<keyword id="KW-0238">DNA-binding</keyword>
<keyword id="KW-0547">Nucleotide-binding</keyword>
<keyword id="KW-1185">Reference proteome</keyword>
<keyword id="KW-0742">SOS response</keyword>
<dbReference type="EMBL" id="AE008922">
    <property type="protein sequence ID" value="AAM39322.1"/>
    <property type="molecule type" value="Genomic_DNA"/>
</dbReference>
<dbReference type="RefSeq" id="NP_635398.1">
    <property type="nucleotide sequence ID" value="NC_003902.1"/>
</dbReference>
<dbReference type="RefSeq" id="WP_011035261.1">
    <property type="nucleotide sequence ID" value="NC_003902.1"/>
</dbReference>
<dbReference type="SMR" id="Q8PEH3"/>
<dbReference type="STRING" id="190485.XCC0003"/>
<dbReference type="EnsemblBacteria" id="AAM39322">
    <property type="protein sequence ID" value="AAM39322"/>
    <property type="gene ID" value="XCC0003"/>
</dbReference>
<dbReference type="KEGG" id="xcc:XCC0003"/>
<dbReference type="PATRIC" id="fig|190485.4.peg.3"/>
<dbReference type="eggNOG" id="COG1195">
    <property type="taxonomic scope" value="Bacteria"/>
</dbReference>
<dbReference type="HOGENOM" id="CLU_040267_0_0_6"/>
<dbReference type="OrthoDB" id="9803889at2"/>
<dbReference type="Proteomes" id="UP000001010">
    <property type="component" value="Chromosome"/>
</dbReference>
<dbReference type="GO" id="GO:0005737">
    <property type="term" value="C:cytoplasm"/>
    <property type="evidence" value="ECO:0007669"/>
    <property type="project" value="UniProtKB-SubCell"/>
</dbReference>
<dbReference type="GO" id="GO:0005524">
    <property type="term" value="F:ATP binding"/>
    <property type="evidence" value="ECO:0007669"/>
    <property type="project" value="UniProtKB-UniRule"/>
</dbReference>
<dbReference type="GO" id="GO:0003697">
    <property type="term" value="F:single-stranded DNA binding"/>
    <property type="evidence" value="ECO:0007669"/>
    <property type="project" value="UniProtKB-UniRule"/>
</dbReference>
<dbReference type="GO" id="GO:0006260">
    <property type="term" value="P:DNA replication"/>
    <property type="evidence" value="ECO:0007669"/>
    <property type="project" value="UniProtKB-UniRule"/>
</dbReference>
<dbReference type="GO" id="GO:0000731">
    <property type="term" value="P:DNA synthesis involved in DNA repair"/>
    <property type="evidence" value="ECO:0000318"/>
    <property type="project" value="GO_Central"/>
</dbReference>
<dbReference type="GO" id="GO:0006302">
    <property type="term" value="P:double-strand break repair"/>
    <property type="evidence" value="ECO:0000318"/>
    <property type="project" value="GO_Central"/>
</dbReference>
<dbReference type="GO" id="GO:0009432">
    <property type="term" value="P:SOS response"/>
    <property type="evidence" value="ECO:0007669"/>
    <property type="project" value="UniProtKB-UniRule"/>
</dbReference>
<dbReference type="Gene3D" id="3.40.50.300">
    <property type="entry name" value="P-loop containing nucleotide triphosphate hydrolases"/>
    <property type="match status" value="1"/>
</dbReference>
<dbReference type="Gene3D" id="1.20.1050.90">
    <property type="entry name" value="RecF/RecN/SMC, N-terminal domain"/>
    <property type="match status" value="1"/>
</dbReference>
<dbReference type="HAMAP" id="MF_00365">
    <property type="entry name" value="RecF"/>
    <property type="match status" value="1"/>
</dbReference>
<dbReference type="InterPro" id="IPR001238">
    <property type="entry name" value="DNA-binding_RecF"/>
</dbReference>
<dbReference type="InterPro" id="IPR018078">
    <property type="entry name" value="DNA-binding_RecF_CS"/>
</dbReference>
<dbReference type="InterPro" id="IPR027417">
    <property type="entry name" value="P-loop_NTPase"/>
</dbReference>
<dbReference type="InterPro" id="IPR003395">
    <property type="entry name" value="RecF/RecN/SMC_N"/>
</dbReference>
<dbReference type="InterPro" id="IPR042174">
    <property type="entry name" value="RecF_2"/>
</dbReference>
<dbReference type="NCBIfam" id="TIGR00611">
    <property type="entry name" value="recf"/>
    <property type="match status" value="1"/>
</dbReference>
<dbReference type="PANTHER" id="PTHR32182">
    <property type="entry name" value="DNA REPLICATION AND REPAIR PROTEIN RECF"/>
    <property type="match status" value="1"/>
</dbReference>
<dbReference type="PANTHER" id="PTHR32182:SF0">
    <property type="entry name" value="DNA REPLICATION AND REPAIR PROTEIN RECF"/>
    <property type="match status" value="1"/>
</dbReference>
<dbReference type="Pfam" id="PF02463">
    <property type="entry name" value="SMC_N"/>
    <property type="match status" value="1"/>
</dbReference>
<dbReference type="SUPFAM" id="SSF52540">
    <property type="entry name" value="P-loop containing nucleoside triphosphate hydrolases"/>
    <property type="match status" value="1"/>
</dbReference>
<dbReference type="PROSITE" id="PS00617">
    <property type="entry name" value="RECF_1"/>
    <property type="match status" value="1"/>
</dbReference>
<dbReference type="PROSITE" id="PS00618">
    <property type="entry name" value="RECF_2"/>
    <property type="match status" value="1"/>
</dbReference>
<reference key="1">
    <citation type="journal article" date="2002" name="Nature">
        <title>Comparison of the genomes of two Xanthomonas pathogens with differing host specificities.</title>
        <authorList>
            <person name="da Silva A.C.R."/>
            <person name="Ferro J.A."/>
            <person name="Reinach F.C."/>
            <person name="Farah C.S."/>
            <person name="Furlan L.R."/>
            <person name="Quaggio R.B."/>
            <person name="Monteiro-Vitorello C.B."/>
            <person name="Van Sluys M.A."/>
            <person name="Almeida N.F. Jr."/>
            <person name="Alves L.M.C."/>
            <person name="do Amaral A.M."/>
            <person name="Bertolini M.C."/>
            <person name="Camargo L.E.A."/>
            <person name="Camarotte G."/>
            <person name="Cannavan F."/>
            <person name="Cardozo J."/>
            <person name="Chambergo F."/>
            <person name="Ciapina L.P."/>
            <person name="Cicarelli R.M.B."/>
            <person name="Coutinho L.L."/>
            <person name="Cursino-Santos J.R."/>
            <person name="El-Dorry H."/>
            <person name="Faria J.B."/>
            <person name="Ferreira A.J.S."/>
            <person name="Ferreira R.C.C."/>
            <person name="Ferro M.I.T."/>
            <person name="Formighieri E.F."/>
            <person name="Franco M.C."/>
            <person name="Greggio C.C."/>
            <person name="Gruber A."/>
            <person name="Katsuyama A.M."/>
            <person name="Kishi L.T."/>
            <person name="Leite R.P."/>
            <person name="Lemos E.G.M."/>
            <person name="Lemos M.V.F."/>
            <person name="Locali E.C."/>
            <person name="Machado M.A."/>
            <person name="Madeira A.M.B.N."/>
            <person name="Martinez-Rossi N.M."/>
            <person name="Martins E.C."/>
            <person name="Meidanis J."/>
            <person name="Menck C.F.M."/>
            <person name="Miyaki C.Y."/>
            <person name="Moon D.H."/>
            <person name="Moreira L.M."/>
            <person name="Novo M.T.M."/>
            <person name="Okura V.K."/>
            <person name="Oliveira M.C."/>
            <person name="Oliveira V.R."/>
            <person name="Pereira H.A."/>
            <person name="Rossi A."/>
            <person name="Sena J.A.D."/>
            <person name="Silva C."/>
            <person name="de Souza R.F."/>
            <person name="Spinola L.A.F."/>
            <person name="Takita M.A."/>
            <person name="Tamura R.E."/>
            <person name="Teixeira E.C."/>
            <person name="Tezza R.I.D."/>
            <person name="Trindade dos Santos M."/>
            <person name="Truffi D."/>
            <person name="Tsai S.M."/>
            <person name="White F.F."/>
            <person name="Setubal J.C."/>
            <person name="Kitajima J.P."/>
        </authorList>
    </citation>
    <scope>NUCLEOTIDE SEQUENCE [LARGE SCALE GENOMIC DNA]</scope>
    <source>
        <strain>ATCC 33913 / DSM 3586 / NCPPB 528 / LMG 568 / P 25</strain>
    </source>
</reference>
<name>RECF_XANCP</name>
<accession>Q8PEH3</accession>
<proteinExistence type="inferred from homology"/>
<evidence type="ECO:0000255" key="1">
    <source>
        <dbReference type="HAMAP-Rule" id="MF_00365"/>
    </source>
</evidence>
<gene>
    <name evidence="1" type="primary">recF</name>
    <name type="ordered locus">XCC0003</name>
</gene>
<protein>
    <recommendedName>
        <fullName evidence="1">DNA replication and repair protein RecF</fullName>
    </recommendedName>
</protein>
<comment type="function">
    <text evidence="1">The RecF protein is involved in DNA metabolism; it is required for DNA replication and normal SOS inducibility. RecF binds preferentially to single-stranded, linear DNA. It also seems to bind ATP.</text>
</comment>
<comment type="subcellular location">
    <subcellularLocation>
        <location evidence="1">Cytoplasm</location>
    </subcellularLocation>
</comment>
<comment type="similarity">
    <text evidence="1">Belongs to the RecF family.</text>
</comment>
<feature type="chain" id="PRO_0000196490" description="DNA replication and repair protein RecF">
    <location>
        <begin position="1"/>
        <end position="368"/>
    </location>
</feature>
<feature type="binding site" evidence="1">
    <location>
        <begin position="30"/>
        <end position="37"/>
    </location>
    <ligand>
        <name>ATP</name>
        <dbReference type="ChEBI" id="CHEBI:30616"/>
    </ligand>
</feature>
<sequence length="368" mass="40820">MHVARLSIHRLRRFEAVEFHPASTLNLLTGDNGAGKTSVLEALHVMAYGRSFRGRVRDGLIRQGGQDLEIFVEWRERAGDSTERTRRAGLRHSGQEWTGRLDGEDVAQLGSLCAALAVVTFEPGSHVLISGGGEPRRRFLDWGLFHVEPDFLALWRRYARALKQRNALLKQGAQPQMLDAWDHELAESGETLTSRRLQYLERLQERLVPVATAIAPSLGLSALTFAPGWRRHEVSLADALLLARERDRQNGYTSQGPHRADWAPLFDALPGKDALSRGQAKLTALACLLAQAEDFAHERGEWPIMALDDLGSELDRHHQARVIQRLASAPAQVLITATELPPGLADAGKTLRRFHVEHGQLVPTTAAD</sequence>
<organism>
    <name type="scientific">Xanthomonas campestris pv. campestris (strain ATCC 33913 / DSM 3586 / NCPPB 528 / LMG 568 / P 25)</name>
    <dbReference type="NCBI Taxonomy" id="190485"/>
    <lineage>
        <taxon>Bacteria</taxon>
        <taxon>Pseudomonadati</taxon>
        <taxon>Pseudomonadota</taxon>
        <taxon>Gammaproteobacteria</taxon>
        <taxon>Lysobacterales</taxon>
        <taxon>Lysobacteraceae</taxon>
        <taxon>Xanthomonas</taxon>
    </lineage>
</organism>